<reference key="1">
    <citation type="journal article" date="2006" name="Proc. Natl. Acad. Sci. U.S.A.">
        <title>Multireplicon genome architecture of Lactobacillus salivarius.</title>
        <authorList>
            <person name="Claesson M.J."/>
            <person name="Li Y."/>
            <person name="Leahy S."/>
            <person name="Canchaya C."/>
            <person name="van Pijkeren J.P."/>
            <person name="Cerdeno-Tarraga A.M."/>
            <person name="Parkhill J."/>
            <person name="Flynn S."/>
            <person name="O'Sullivan G.C."/>
            <person name="Collins J.K."/>
            <person name="Higgins D."/>
            <person name="Shanahan F."/>
            <person name="Fitzgerald G.F."/>
            <person name="van Sinderen D."/>
            <person name="O'Toole P.W."/>
        </authorList>
    </citation>
    <scope>NUCLEOTIDE SEQUENCE [LARGE SCALE GENOMIC DNA]</scope>
    <source>
        <strain>UCC118</strain>
    </source>
</reference>
<proteinExistence type="inferred from homology"/>
<evidence type="ECO:0000255" key="1">
    <source>
        <dbReference type="HAMAP-Rule" id="MF_01159"/>
    </source>
</evidence>
<keyword id="KW-0963">Cytoplasm</keyword>
<keyword id="KW-0235">DNA replication</keyword>
<keyword id="KW-0236">DNA replication inhibitor</keyword>
<keyword id="KW-0479">Metal-binding</keyword>
<keyword id="KW-1185">Reference proteome</keyword>
<keyword id="KW-0862">Zinc</keyword>
<protein>
    <recommendedName>
        <fullName evidence="1">Replication initiation control protein YabA</fullName>
    </recommendedName>
</protein>
<sequence>MNKRELYDSFEELEKQTKFTLSQIERIKAEMGKVIEKNAELEIENQHLREHLHEIEQKQKGNKEGTELSKSRKNLEKLYEEGFHVCNVDNMYGSRRVNDEPCVFCQDVIYGDRH</sequence>
<comment type="function">
    <text evidence="1">Involved in control of chromosome replication initiation. Inhibits the cooperative binding of DnaA to the oriC region, thus negatively regulating initiation of chromosome replication. Inhibits the ability of DnaA-ATP to form a helix on DNA; does not disassemble preformed DnaA-DNA helices. Decreases the residence time of DnaA on the chromosome at its binding sites (oriC, replication forks and promoter-binding sites). Tethers DnaA to the replication machinery via the DNA polymerase beta sliding clamp subunit (dnaN). Associates with oriC and other DnaA targets on the chromosome in a DnaA-dependent manner.</text>
</comment>
<comment type="cofactor">
    <cofactor evidence="1">
        <name>Zn(2+)</name>
        <dbReference type="ChEBI" id="CHEBI:29105"/>
    </cofactor>
    <text evidence="1">Binds 1 zinc ion per subunit.</text>
</comment>
<comment type="subunit">
    <text evidence="1">Homotetramer. Interacts with both DnaA and DnaN, acting as a bridge between these two proteins.</text>
</comment>
<comment type="subcellular location">
    <subcellularLocation>
        <location evidence="1">Cytoplasm</location>
        <location evidence="1">Nucleoid</location>
    </subcellularLocation>
    <text evidence="1">Localizes in tight foci, which correspond to the replisome at mid-cell throughout the cell cycle.</text>
</comment>
<comment type="similarity">
    <text evidence="1">Belongs to the YabA family.</text>
</comment>
<accession>Q1WSU9</accession>
<organism>
    <name type="scientific">Ligilactobacillus salivarius (strain UCC118)</name>
    <name type="common">Lactobacillus salivarius</name>
    <dbReference type="NCBI Taxonomy" id="362948"/>
    <lineage>
        <taxon>Bacteria</taxon>
        <taxon>Bacillati</taxon>
        <taxon>Bacillota</taxon>
        <taxon>Bacilli</taxon>
        <taxon>Lactobacillales</taxon>
        <taxon>Lactobacillaceae</taxon>
        <taxon>Ligilactobacillus</taxon>
    </lineage>
</organism>
<feature type="chain" id="PRO_1000065580" description="Replication initiation control protein YabA">
    <location>
        <begin position="1"/>
        <end position="114"/>
    </location>
</feature>
<feature type="binding site" evidence="1">
    <location>
        <position position="84"/>
    </location>
    <ligand>
        <name>Zn(2+)</name>
        <dbReference type="ChEBI" id="CHEBI:29105"/>
    </ligand>
</feature>
<feature type="binding site" evidence="1">
    <location>
        <position position="86"/>
    </location>
    <ligand>
        <name>Zn(2+)</name>
        <dbReference type="ChEBI" id="CHEBI:29105"/>
    </ligand>
</feature>
<feature type="binding site" evidence="1">
    <location>
        <position position="102"/>
    </location>
    <ligand>
        <name>Zn(2+)</name>
        <dbReference type="ChEBI" id="CHEBI:29105"/>
    </ligand>
</feature>
<feature type="binding site" evidence="1">
    <location>
        <position position="105"/>
    </location>
    <ligand>
        <name>Zn(2+)</name>
        <dbReference type="ChEBI" id="CHEBI:29105"/>
    </ligand>
</feature>
<gene>
    <name evidence="1" type="primary">yabA</name>
    <name type="ordered locus">LSL_1222</name>
</gene>
<name>YABA_LIGS1</name>
<dbReference type="EMBL" id="CP000233">
    <property type="protein sequence ID" value="ABE00030.1"/>
    <property type="molecule type" value="Genomic_DNA"/>
</dbReference>
<dbReference type="RefSeq" id="WP_003700660.1">
    <property type="nucleotide sequence ID" value="NC_007929.1"/>
</dbReference>
<dbReference type="RefSeq" id="YP_536113.1">
    <property type="nucleotide sequence ID" value="NC_007929.1"/>
</dbReference>
<dbReference type="SMR" id="Q1WSU9"/>
<dbReference type="STRING" id="362948.LSL_1222"/>
<dbReference type="KEGG" id="lsl:LSL_1222"/>
<dbReference type="PATRIC" id="fig|362948.14.peg.1296"/>
<dbReference type="HOGENOM" id="CLU_157169_0_0_9"/>
<dbReference type="OrthoDB" id="2112130at2"/>
<dbReference type="Proteomes" id="UP000006559">
    <property type="component" value="Chromosome"/>
</dbReference>
<dbReference type="GO" id="GO:0009295">
    <property type="term" value="C:nucleoid"/>
    <property type="evidence" value="ECO:0007669"/>
    <property type="project" value="UniProtKB-SubCell"/>
</dbReference>
<dbReference type="GO" id="GO:0006260">
    <property type="term" value="P:DNA replication"/>
    <property type="evidence" value="ECO:0007669"/>
    <property type="project" value="UniProtKB-UniRule"/>
</dbReference>
<dbReference type="HAMAP" id="MF_01159">
    <property type="entry name" value="YabA"/>
    <property type="match status" value="1"/>
</dbReference>
<dbReference type="InterPro" id="IPR010377">
    <property type="entry name" value="YabA"/>
</dbReference>
<dbReference type="Pfam" id="PF06156">
    <property type="entry name" value="YabA"/>
    <property type="match status" value="1"/>
</dbReference>
<dbReference type="PIRSF" id="PIRSF021439">
    <property type="entry name" value="DUF972"/>
    <property type="match status" value="1"/>
</dbReference>